<dbReference type="EMBL" id="AE014075">
    <property type="protein sequence ID" value="AAN82509.1"/>
    <property type="molecule type" value="Genomic_DNA"/>
</dbReference>
<dbReference type="RefSeq" id="WP_001118930.1">
    <property type="nucleotide sequence ID" value="NZ_CP051263.1"/>
</dbReference>
<dbReference type="SMR" id="P0AG60"/>
<dbReference type="STRING" id="199310.c4071"/>
<dbReference type="GeneID" id="93778680"/>
<dbReference type="KEGG" id="ecc:c4071"/>
<dbReference type="eggNOG" id="COG0199">
    <property type="taxonomic scope" value="Bacteria"/>
</dbReference>
<dbReference type="HOGENOM" id="CLU_139869_0_1_6"/>
<dbReference type="BioCyc" id="ECOL199310:C4071-MONOMER"/>
<dbReference type="Proteomes" id="UP000001410">
    <property type="component" value="Chromosome"/>
</dbReference>
<dbReference type="GO" id="GO:0005737">
    <property type="term" value="C:cytoplasm"/>
    <property type="evidence" value="ECO:0007669"/>
    <property type="project" value="UniProtKB-ARBA"/>
</dbReference>
<dbReference type="GO" id="GO:0015935">
    <property type="term" value="C:small ribosomal subunit"/>
    <property type="evidence" value="ECO:0007669"/>
    <property type="project" value="TreeGrafter"/>
</dbReference>
<dbReference type="GO" id="GO:0019843">
    <property type="term" value="F:rRNA binding"/>
    <property type="evidence" value="ECO:0007669"/>
    <property type="project" value="UniProtKB-UniRule"/>
</dbReference>
<dbReference type="GO" id="GO:0003735">
    <property type="term" value="F:structural constituent of ribosome"/>
    <property type="evidence" value="ECO:0007669"/>
    <property type="project" value="InterPro"/>
</dbReference>
<dbReference type="GO" id="GO:0006412">
    <property type="term" value="P:translation"/>
    <property type="evidence" value="ECO:0007669"/>
    <property type="project" value="UniProtKB-UniRule"/>
</dbReference>
<dbReference type="FunFam" id="1.10.287.1480:FF:000001">
    <property type="entry name" value="30S ribosomal protein S14"/>
    <property type="match status" value="1"/>
</dbReference>
<dbReference type="Gene3D" id="1.10.287.1480">
    <property type="match status" value="1"/>
</dbReference>
<dbReference type="HAMAP" id="MF_00537">
    <property type="entry name" value="Ribosomal_uS14_1"/>
    <property type="match status" value="1"/>
</dbReference>
<dbReference type="InterPro" id="IPR001209">
    <property type="entry name" value="Ribosomal_uS14"/>
</dbReference>
<dbReference type="InterPro" id="IPR023036">
    <property type="entry name" value="Ribosomal_uS14_bac/plastid"/>
</dbReference>
<dbReference type="InterPro" id="IPR018271">
    <property type="entry name" value="Ribosomal_uS14_CS"/>
</dbReference>
<dbReference type="NCBIfam" id="NF006477">
    <property type="entry name" value="PRK08881.1"/>
    <property type="match status" value="1"/>
</dbReference>
<dbReference type="PANTHER" id="PTHR19836">
    <property type="entry name" value="30S RIBOSOMAL PROTEIN S14"/>
    <property type="match status" value="1"/>
</dbReference>
<dbReference type="PANTHER" id="PTHR19836:SF19">
    <property type="entry name" value="SMALL RIBOSOMAL SUBUNIT PROTEIN US14M"/>
    <property type="match status" value="1"/>
</dbReference>
<dbReference type="Pfam" id="PF00253">
    <property type="entry name" value="Ribosomal_S14"/>
    <property type="match status" value="1"/>
</dbReference>
<dbReference type="SUPFAM" id="SSF57716">
    <property type="entry name" value="Glucocorticoid receptor-like (DNA-binding domain)"/>
    <property type="match status" value="1"/>
</dbReference>
<dbReference type="PROSITE" id="PS00527">
    <property type="entry name" value="RIBOSOMAL_S14"/>
    <property type="match status" value="1"/>
</dbReference>
<name>RS14_ECOL6</name>
<reference key="1">
    <citation type="journal article" date="2002" name="Proc. Natl. Acad. Sci. U.S.A.">
        <title>Extensive mosaic structure revealed by the complete genome sequence of uropathogenic Escherichia coli.</title>
        <authorList>
            <person name="Welch R.A."/>
            <person name="Burland V."/>
            <person name="Plunkett G. III"/>
            <person name="Redford P."/>
            <person name="Roesch P."/>
            <person name="Rasko D."/>
            <person name="Buckles E.L."/>
            <person name="Liou S.-R."/>
            <person name="Boutin A."/>
            <person name="Hackett J."/>
            <person name="Stroud D."/>
            <person name="Mayhew G.F."/>
            <person name="Rose D.J."/>
            <person name="Zhou S."/>
            <person name="Schwartz D.C."/>
            <person name="Perna N.T."/>
            <person name="Mobley H.L.T."/>
            <person name="Donnenberg M.S."/>
            <person name="Blattner F.R."/>
        </authorList>
    </citation>
    <scope>NUCLEOTIDE SEQUENCE [LARGE SCALE GENOMIC DNA]</scope>
    <source>
        <strain>CFT073 / ATCC 700928 / UPEC</strain>
    </source>
</reference>
<proteinExistence type="inferred from homology"/>
<gene>
    <name evidence="2" type="primary">rpsN</name>
    <name type="ordered locus">c4071</name>
</gene>
<accession>P0AG60</accession>
<accession>P02370</accession>
<protein>
    <recommendedName>
        <fullName evidence="2">Small ribosomal subunit protein uS14</fullName>
    </recommendedName>
    <alternativeName>
        <fullName evidence="3">30S ribosomal protein S14</fullName>
    </alternativeName>
</protein>
<feature type="initiator methionine" description="Removed" evidence="1">
    <location>
        <position position="1"/>
    </location>
</feature>
<feature type="chain" id="PRO_0000130892" description="Small ribosomal subunit protein uS14">
    <location>
        <begin position="2"/>
        <end position="101"/>
    </location>
</feature>
<evidence type="ECO:0000250" key="1"/>
<evidence type="ECO:0000255" key="2">
    <source>
        <dbReference type="HAMAP-Rule" id="MF_00537"/>
    </source>
</evidence>
<evidence type="ECO:0000305" key="3"/>
<sequence>MAKQSMKAREVKRVALADKYFAKRAELKAIISDVNASDEDRWNAVLKLQTLPRDSSPSRQRNRCRQTGRPHGFLRKFGLSRIKVREAAMRGEIPGLKKASW</sequence>
<organism>
    <name type="scientific">Escherichia coli O6:H1 (strain CFT073 / ATCC 700928 / UPEC)</name>
    <dbReference type="NCBI Taxonomy" id="199310"/>
    <lineage>
        <taxon>Bacteria</taxon>
        <taxon>Pseudomonadati</taxon>
        <taxon>Pseudomonadota</taxon>
        <taxon>Gammaproteobacteria</taxon>
        <taxon>Enterobacterales</taxon>
        <taxon>Enterobacteriaceae</taxon>
        <taxon>Escherichia</taxon>
    </lineage>
</organism>
<comment type="function">
    <text evidence="2">Binds 16S rRNA, required for the assembly of 30S particles and may also be responsible for determining the conformation of the 16S rRNA at the A site.</text>
</comment>
<comment type="subunit">
    <text evidence="2">Part of the 30S ribosomal subunit. Contacts proteins S3 and S10.</text>
</comment>
<comment type="similarity">
    <text evidence="2">Belongs to the universal ribosomal protein uS14 family.</text>
</comment>
<keyword id="KW-1185">Reference proteome</keyword>
<keyword id="KW-0687">Ribonucleoprotein</keyword>
<keyword id="KW-0689">Ribosomal protein</keyword>
<keyword id="KW-0694">RNA-binding</keyword>
<keyword id="KW-0699">rRNA-binding</keyword>